<sequence length="103" mass="11963">MQPNDITFFQRFQDDILAGRKTITIRDESESHFKTGDVLRVGRFEDDGYFCTIEVTATSTVTLDTLTEKHAEQENMTLTELKKVIADIYPDQTQFYVIEFKCL</sequence>
<proteinExistence type="inferred from homology"/>
<evidence type="ECO:0000255" key="1"/>
<evidence type="ECO:0000255" key="2">
    <source>
        <dbReference type="HAMAP-Rule" id="MF_00684"/>
    </source>
</evidence>
<keyword id="KW-0378">Hydrolase</keyword>
<keyword id="KW-1185">Reference proteome</keyword>
<gene>
    <name type="primary">yqfB</name>
    <name type="ordered locus">Ecok1_28360</name>
    <name type="ORF">APECO1_3627</name>
</gene>
<organism>
    <name type="scientific">Escherichia coli O1:K1 / APEC</name>
    <dbReference type="NCBI Taxonomy" id="405955"/>
    <lineage>
        <taxon>Bacteria</taxon>
        <taxon>Pseudomonadati</taxon>
        <taxon>Pseudomonadota</taxon>
        <taxon>Gammaproteobacteria</taxon>
        <taxon>Enterobacterales</taxon>
        <taxon>Enterobacteriaceae</taxon>
        <taxon>Escherichia</taxon>
    </lineage>
</organism>
<protein>
    <recommendedName>
        <fullName evidence="2">N(4)-acetylcytidine amidohydrolase</fullName>
        <shortName evidence="2">ac4C amidohydrolase</shortName>
        <ecNumber evidence="2">3.5.1.135</ecNumber>
    </recommendedName>
</protein>
<comment type="function">
    <text evidence="2">Catalyzes the hydrolysis of N(4)-acetylcytidine (ac4C).</text>
</comment>
<comment type="catalytic activity">
    <reaction evidence="2">
        <text>N(4)-acetylcytidine + H2O = cytidine + acetate + H(+)</text>
        <dbReference type="Rhea" id="RHEA:62932"/>
        <dbReference type="ChEBI" id="CHEBI:15377"/>
        <dbReference type="ChEBI" id="CHEBI:15378"/>
        <dbReference type="ChEBI" id="CHEBI:17562"/>
        <dbReference type="ChEBI" id="CHEBI:30089"/>
        <dbReference type="ChEBI" id="CHEBI:70989"/>
        <dbReference type="EC" id="3.5.1.135"/>
    </reaction>
</comment>
<comment type="catalytic activity">
    <reaction evidence="2">
        <text>N(4)-acetyl-2'-deoxycytidine + H2O = 2'-deoxycytidine + acetate + H(+)</text>
        <dbReference type="Rhea" id="RHEA:62936"/>
        <dbReference type="ChEBI" id="CHEBI:15377"/>
        <dbReference type="ChEBI" id="CHEBI:15378"/>
        <dbReference type="ChEBI" id="CHEBI:15698"/>
        <dbReference type="ChEBI" id="CHEBI:30089"/>
        <dbReference type="ChEBI" id="CHEBI:146133"/>
        <dbReference type="EC" id="3.5.1.135"/>
    </reaction>
</comment>
<comment type="catalytic activity">
    <reaction evidence="2">
        <text>N(4)-acetylcytosine + H2O = cytosine + acetate + H(+)</text>
        <dbReference type="Rhea" id="RHEA:62940"/>
        <dbReference type="ChEBI" id="CHEBI:15377"/>
        <dbReference type="ChEBI" id="CHEBI:15378"/>
        <dbReference type="ChEBI" id="CHEBI:16040"/>
        <dbReference type="ChEBI" id="CHEBI:30089"/>
        <dbReference type="ChEBI" id="CHEBI:146134"/>
        <dbReference type="EC" id="3.5.1.135"/>
    </reaction>
</comment>
<comment type="similarity">
    <text evidence="2">Belongs to the N(4)-acetylcytidine amidohydrolase family.</text>
</comment>
<feature type="chain" id="PRO_1000044945" description="N(4)-acetylcytidine amidohydrolase">
    <location>
        <begin position="1"/>
        <end position="103"/>
    </location>
</feature>
<feature type="domain" description="ASCH" evidence="1">
    <location>
        <begin position="6"/>
        <end position="101"/>
    </location>
</feature>
<feature type="active site" description="Proton acceptor" evidence="2">
    <location>
        <position position="21"/>
    </location>
</feature>
<feature type="active site" description="Nucleophile" evidence="2">
    <location>
        <position position="24"/>
    </location>
</feature>
<feature type="active site" description="Proton donor" evidence="2">
    <location>
        <position position="74"/>
    </location>
</feature>
<reference key="1">
    <citation type="journal article" date="2007" name="J. Bacteriol.">
        <title>The genome sequence of avian pathogenic Escherichia coli strain O1:K1:H7 shares strong similarities with human extraintestinal pathogenic E. coli genomes.</title>
        <authorList>
            <person name="Johnson T.J."/>
            <person name="Kariyawasam S."/>
            <person name="Wannemuehler Y."/>
            <person name="Mangiamele P."/>
            <person name="Johnson S.J."/>
            <person name="Doetkott C."/>
            <person name="Skyberg J.A."/>
            <person name="Lynne A.M."/>
            <person name="Johnson J.R."/>
            <person name="Nolan L.K."/>
        </authorList>
    </citation>
    <scope>NUCLEOTIDE SEQUENCE [LARGE SCALE GENOMIC DNA]</scope>
</reference>
<accession>A1AF90</accession>
<name>AC4CH_ECOK1</name>
<dbReference type="EC" id="3.5.1.135" evidence="2"/>
<dbReference type="EMBL" id="CP000468">
    <property type="protein sequence ID" value="ABJ02330.1"/>
    <property type="molecule type" value="Genomic_DNA"/>
</dbReference>
<dbReference type="RefSeq" id="WP_001182956.1">
    <property type="nucleotide sequence ID" value="NZ_CADILS010000010.1"/>
</dbReference>
<dbReference type="BMRB" id="A1AF90"/>
<dbReference type="SMR" id="A1AF90"/>
<dbReference type="KEGG" id="ecv:APECO1_3627"/>
<dbReference type="HOGENOM" id="CLU_152586_0_0_6"/>
<dbReference type="Proteomes" id="UP000008216">
    <property type="component" value="Chromosome"/>
</dbReference>
<dbReference type="GO" id="GO:0005829">
    <property type="term" value="C:cytosol"/>
    <property type="evidence" value="ECO:0007669"/>
    <property type="project" value="TreeGrafter"/>
</dbReference>
<dbReference type="GO" id="GO:0016813">
    <property type="term" value="F:hydrolase activity, acting on carbon-nitrogen (but not peptide) bonds, in linear amidines"/>
    <property type="evidence" value="ECO:0007669"/>
    <property type="project" value="UniProtKB-UniRule"/>
</dbReference>
<dbReference type="GO" id="GO:0106251">
    <property type="term" value="F:N4-acetylcytidine amidohydrolase activity"/>
    <property type="evidence" value="ECO:0007669"/>
    <property type="project" value="RHEA"/>
</dbReference>
<dbReference type="CDD" id="cd06552">
    <property type="entry name" value="ASCH_yqfb_like"/>
    <property type="match status" value="1"/>
</dbReference>
<dbReference type="FunFam" id="2.30.130.30:FF:000001">
    <property type="entry name" value="UPF0267 protein YqfB"/>
    <property type="match status" value="1"/>
</dbReference>
<dbReference type="Gene3D" id="2.30.130.30">
    <property type="entry name" value="Hypothetical protein"/>
    <property type="match status" value="1"/>
</dbReference>
<dbReference type="HAMAP" id="MF_00684">
    <property type="entry name" value="ac4C_amidohydr"/>
    <property type="match status" value="1"/>
</dbReference>
<dbReference type="InterPro" id="IPR008314">
    <property type="entry name" value="AC4CH"/>
</dbReference>
<dbReference type="InterPro" id="IPR007374">
    <property type="entry name" value="ASCH_domain"/>
</dbReference>
<dbReference type="InterPro" id="IPR015947">
    <property type="entry name" value="PUA-like_sf"/>
</dbReference>
<dbReference type="NCBIfam" id="NF003443">
    <property type="entry name" value="PRK04980.1"/>
    <property type="match status" value="1"/>
</dbReference>
<dbReference type="PANTHER" id="PTHR38088">
    <property type="entry name" value="UCP029143 FAMILY PROTEIN"/>
    <property type="match status" value="1"/>
</dbReference>
<dbReference type="PANTHER" id="PTHR38088:SF2">
    <property type="entry name" value="UCP029143 FAMILY PROTEIN"/>
    <property type="match status" value="1"/>
</dbReference>
<dbReference type="Pfam" id="PF04266">
    <property type="entry name" value="ASCH"/>
    <property type="match status" value="1"/>
</dbReference>
<dbReference type="PIRSF" id="PIRSF029143">
    <property type="entry name" value="UCP029143"/>
    <property type="match status" value="1"/>
</dbReference>
<dbReference type="SMART" id="SM01022">
    <property type="entry name" value="ASCH"/>
    <property type="match status" value="1"/>
</dbReference>
<dbReference type="SUPFAM" id="SSF88697">
    <property type="entry name" value="PUA domain-like"/>
    <property type="match status" value="1"/>
</dbReference>